<accession>O33666</accession>
<accession>D3HBR9</accession>
<feature type="propeptide" id="PRO_0000005871" evidence="1">
    <location>
        <begin position="1"/>
        <end position="24"/>
    </location>
</feature>
<feature type="peptide" id="PRO_0000005872" description="Competence-stimulating peptide">
    <location>
        <begin position="25"/>
        <end position="40"/>
    </location>
</feature>
<evidence type="ECO:0000255" key="1"/>
<evidence type="ECO:0000305" key="2"/>
<keyword id="KW-0178">Competence</keyword>
<keyword id="KW-0588">Pheromone</keyword>
<keyword id="KW-0964">Secreted</keyword>
<protein>
    <recommendedName>
        <fullName>Competence-stimulating peptide</fullName>
        <shortName>CSP</shortName>
    </recommendedName>
</protein>
<dbReference type="EMBL" id="AJ000865">
    <property type="protein sequence ID" value="CAA04344.1"/>
    <property type="molecule type" value="Genomic_DNA"/>
</dbReference>
<dbReference type="EMBL" id="FN568063">
    <property type="protein sequence ID" value="CBJ23319.1"/>
    <property type="molecule type" value="Genomic_DNA"/>
</dbReference>
<dbReference type="RefSeq" id="WP_000799698.1">
    <property type="nucleotide sequence ID" value="NC_013853.1"/>
</dbReference>
<dbReference type="RefSeq" id="YP_003447179.1">
    <property type="nucleotide sequence ID" value="NC_013853.1"/>
</dbReference>
<dbReference type="STRING" id="365659.smi_2085"/>
<dbReference type="KEGG" id="smb:smi_2085"/>
<dbReference type="PATRIC" id="fig|365659.3.peg.2096"/>
<dbReference type="eggNOG" id="ENOG50303JE">
    <property type="taxonomic scope" value="Bacteria"/>
</dbReference>
<dbReference type="HOGENOM" id="CLU_216496_0_0_9"/>
<dbReference type="OrthoDB" id="2228515at2"/>
<dbReference type="Proteomes" id="UP000008563">
    <property type="component" value="Chromosome"/>
</dbReference>
<dbReference type="GO" id="GO:0005576">
    <property type="term" value="C:extracellular region"/>
    <property type="evidence" value="ECO:0007669"/>
    <property type="project" value="UniProtKB-SubCell"/>
</dbReference>
<dbReference type="GO" id="GO:0005186">
    <property type="term" value="F:pheromone activity"/>
    <property type="evidence" value="ECO:0007669"/>
    <property type="project" value="UniProtKB-KW"/>
</dbReference>
<dbReference type="GO" id="GO:0030420">
    <property type="term" value="P:establishment of competence for transformation"/>
    <property type="evidence" value="ECO:0007669"/>
    <property type="project" value="UniProtKB-KW"/>
</dbReference>
<dbReference type="InterPro" id="IPR004288">
    <property type="entry name" value="Competence_ComC"/>
</dbReference>
<dbReference type="NCBIfam" id="NF033214">
    <property type="entry name" value="ComC_Streptocco"/>
    <property type="match status" value="1"/>
</dbReference>
<dbReference type="Pfam" id="PF03047">
    <property type="entry name" value="ComC"/>
    <property type="match status" value="1"/>
</dbReference>
<proteinExistence type="inferred from homology"/>
<sequence>MKNTVKLEQFVALKEKELQKIKGGEMRKPDGALFNLFRRR</sequence>
<organism>
    <name type="scientific">Streptococcus mitis (strain B6)</name>
    <dbReference type="NCBI Taxonomy" id="365659"/>
    <lineage>
        <taxon>Bacteria</taxon>
        <taxon>Bacillati</taxon>
        <taxon>Bacillota</taxon>
        <taxon>Bacilli</taxon>
        <taxon>Lactobacillales</taxon>
        <taxon>Streptococcaceae</taxon>
        <taxon>Streptococcus</taxon>
        <taxon>Streptococcus mitis group</taxon>
    </lineage>
</organism>
<name>CSP2_STRM6</name>
<gene>
    <name type="primary">comC</name>
    <name type="ordered locus">smi_2085</name>
</gene>
<reference key="1">
    <citation type="journal article" date="1997" name="J. Bacteriol.">
        <title>Natural competence in the genus Streptococcus: evidence that streptococci can change pherotype by interspecies recombinational exchanges.</title>
        <authorList>
            <person name="Haevarstein L.S."/>
            <person name="Hakenbeck R."/>
            <person name="Gaustad P."/>
        </authorList>
    </citation>
    <scope>NUCLEOTIDE SEQUENCE [GENOMIC DNA]</scope>
</reference>
<reference key="2">
    <citation type="journal article" date="2010" name="PLoS ONE">
        <title>The genome of Streptococcus mitis B6--what is a commensal?</title>
        <authorList>
            <person name="Denapaite D."/>
            <person name="Bruckner R."/>
            <person name="Nuhn M."/>
            <person name="Reichmann P."/>
            <person name="Henrich B."/>
            <person name="Maurer P."/>
            <person name="Schahle Y."/>
            <person name="Selbmann P."/>
            <person name="Zimmermann W."/>
            <person name="Wambutt R."/>
            <person name="Hakenbeck R."/>
        </authorList>
    </citation>
    <scope>NUCLEOTIDE SEQUENCE [LARGE SCALE GENOMIC DNA]</scope>
    <source>
        <strain>B6</strain>
    </source>
</reference>
<comment type="function">
    <text>Acts as a pheromone, induces cells to develop competence for genetic transformation.</text>
</comment>
<comment type="subcellular location">
    <subcellularLocation>
        <location>Secreted</location>
    </subcellularLocation>
</comment>
<comment type="similarity">
    <text evidence="2">Belongs to the ComC family.</text>
</comment>